<keyword id="KW-0028">Amino-acid biosynthesis</keyword>
<keyword id="KW-0067">ATP-binding</keyword>
<keyword id="KW-0963">Cytoplasm</keyword>
<keyword id="KW-0368">Histidine biosynthesis</keyword>
<keyword id="KW-0378">Hydrolase</keyword>
<keyword id="KW-0547">Nucleotide-binding</keyword>
<keyword id="KW-1185">Reference proteome</keyword>
<name>HIS2_GEOMG</name>
<gene>
    <name evidence="1" type="primary">hisE</name>
    <name type="ordered locus">Gmet_0390</name>
</gene>
<dbReference type="EC" id="3.6.1.31" evidence="1"/>
<dbReference type="EMBL" id="CP000148">
    <property type="protein sequence ID" value="ABB30633.1"/>
    <property type="molecule type" value="Genomic_DNA"/>
</dbReference>
<dbReference type="RefSeq" id="WP_004512362.1">
    <property type="nucleotide sequence ID" value="NC_007517.1"/>
</dbReference>
<dbReference type="SMR" id="Q39YP1"/>
<dbReference type="STRING" id="269799.Gmet_0390"/>
<dbReference type="KEGG" id="gme:Gmet_0390"/>
<dbReference type="eggNOG" id="COG0140">
    <property type="taxonomic scope" value="Bacteria"/>
</dbReference>
<dbReference type="HOGENOM" id="CLU_123337_1_2_7"/>
<dbReference type="UniPathway" id="UPA00031">
    <property type="reaction ID" value="UER00007"/>
</dbReference>
<dbReference type="Proteomes" id="UP000007073">
    <property type="component" value="Chromosome"/>
</dbReference>
<dbReference type="GO" id="GO:0005737">
    <property type="term" value="C:cytoplasm"/>
    <property type="evidence" value="ECO:0007669"/>
    <property type="project" value="UniProtKB-SubCell"/>
</dbReference>
<dbReference type="GO" id="GO:0005524">
    <property type="term" value="F:ATP binding"/>
    <property type="evidence" value="ECO:0007669"/>
    <property type="project" value="UniProtKB-KW"/>
</dbReference>
<dbReference type="GO" id="GO:0004636">
    <property type="term" value="F:phosphoribosyl-ATP diphosphatase activity"/>
    <property type="evidence" value="ECO:0007669"/>
    <property type="project" value="UniProtKB-UniRule"/>
</dbReference>
<dbReference type="GO" id="GO:0000105">
    <property type="term" value="P:L-histidine biosynthetic process"/>
    <property type="evidence" value="ECO:0007669"/>
    <property type="project" value="UniProtKB-UniRule"/>
</dbReference>
<dbReference type="CDD" id="cd11534">
    <property type="entry name" value="NTP-PPase_HisIE_like"/>
    <property type="match status" value="1"/>
</dbReference>
<dbReference type="Gene3D" id="1.10.287.1080">
    <property type="entry name" value="MazG-like"/>
    <property type="match status" value="1"/>
</dbReference>
<dbReference type="HAMAP" id="MF_01020">
    <property type="entry name" value="HisE"/>
    <property type="match status" value="1"/>
</dbReference>
<dbReference type="InterPro" id="IPR008179">
    <property type="entry name" value="HisE"/>
</dbReference>
<dbReference type="InterPro" id="IPR021130">
    <property type="entry name" value="PRib-ATP_PPHydrolase-like"/>
</dbReference>
<dbReference type="NCBIfam" id="TIGR03188">
    <property type="entry name" value="histidine_hisI"/>
    <property type="match status" value="1"/>
</dbReference>
<dbReference type="NCBIfam" id="NF001611">
    <property type="entry name" value="PRK00400.1-3"/>
    <property type="match status" value="1"/>
</dbReference>
<dbReference type="NCBIfam" id="NF001613">
    <property type="entry name" value="PRK00400.1-5"/>
    <property type="match status" value="1"/>
</dbReference>
<dbReference type="PANTHER" id="PTHR42945">
    <property type="entry name" value="HISTIDINE BIOSYNTHESIS BIFUNCTIONAL PROTEIN"/>
    <property type="match status" value="1"/>
</dbReference>
<dbReference type="PANTHER" id="PTHR42945:SF9">
    <property type="entry name" value="HISTIDINE BIOSYNTHESIS BIFUNCTIONAL PROTEIN HISIE"/>
    <property type="match status" value="1"/>
</dbReference>
<dbReference type="Pfam" id="PF01503">
    <property type="entry name" value="PRA-PH"/>
    <property type="match status" value="1"/>
</dbReference>
<dbReference type="SUPFAM" id="SSF101386">
    <property type="entry name" value="all-alpha NTP pyrophosphatases"/>
    <property type="match status" value="1"/>
</dbReference>
<feature type="chain" id="PRO_0000230175" description="Phosphoribosyl-ATP pyrophosphatase">
    <location>
        <begin position="1"/>
        <end position="109"/>
    </location>
</feature>
<sequence length="109" mass="12284">MNERDDILQAVYRVIKERKGASADSSYTASLLQKGIDKILKKLGEEATEVVIAGKGGKREEIVYETADLFFHTLVLLGYYDIDPEEIYAELRRRFGTSGIAEKASRPKE</sequence>
<comment type="catalytic activity">
    <reaction evidence="1">
        <text>1-(5-phospho-beta-D-ribosyl)-ATP + H2O = 1-(5-phospho-beta-D-ribosyl)-5'-AMP + diphosphate + H(+)</text>
        <dbReference type="Rhea" id="RHEA:22828"/>
        <dbReference type="ChEBI" id="CHEBI:15377"/>
        <dbReference type="ChEBI" id="CHEBI:15378"/>
        <dbReference type="ChEBI" id="CHEBI:33019"/>
        <dbReference type="ChEBI" id="CHEBI:59457"/>
        <dbReference type="ChEBI" id="CHEBI:73183"/>
        <dbReference type="EC" id="3.6.1.31"/>
    </reaction>
</comment>
<comment type="pathway">
    <text evidence="1">Amino-acid biosynthesis; L-histidine biosynthesis; L-histidine from 5-phospho-alpha-D-ribose 1-diphosphate: step 2/9.</text>
</comment>
<comment type="subcellular location">
    <subcellularLocation>
        <location evidence="1">Cytoplasm</location>
    </subcellularLocation>
</comment>
<comment type="similarity">
    <text evidence="1">Belongs to the PRA-PH family.</text>
</comment>
<reference key="1">
    <citation type="journal article" date="2009" name="BMC Microbiol.">
        <title>The genome sequence of Geobacter metallireducens: features of metabolism, physiology and regulation common and dissimilar to Geobacter sulfurreducens.</title>
        <authorList>
            <person name="Aklujkar M."/>
            <person name="Krushkal J."/>
            <person name="DiBartolo G."/>
            <person name="Lapidus A."/>
            <person name="Land M.L."/>
            <person name="Lovley D.R."/>
        </authorList>
    </citation>
    <scope>NUCLEOTIDE SEQUENCE [LARGE SCALE GENOMIC DNA]</scope>
    <source>
        <strain>ATCC 53774 / DSM 7210 / GS-15</strain>
    </source>
</reference>
<proteinExistence type="inferred from homology"/>
<accession>Q39YP1</accession>
<protein>
    <recommendedName>
        <fullName evidence="1">Phosphoribosyl-ATP pyrophosphatase</fullName>
        <shortName evidence="1">PRA-PH</shortName>
        <ecNumber evidence="1">3.6.1.31</ecNumber>
    </recommendedName>
</protein>
<evidence type="ECO:0000255" key="1">
    <source>
        <dbReference type="HAMAP-Rule" id="MF_01020"/>
    </source>
</evidence>
<organism>
    <name type="scientific">Geobacter metallireducens (strain ATCC 53774 / DSM 7210 / GS-15)</name>
    <dbReference type="NCBI Taxonomy" id="269799"/>
    <lineage>
        <taxon>Bacteria</taxon>
        <taxon>Pseudomonadati</taxon>
        <taxon>Thermodesulfobacteriota</taxon>
        <taxon>Desulfuromonadia</taxon>
        <taxon>Geobacterales</taxon>
        <taxon>Geobacteraceae</taxon>
        <taxon>Geobacter</taxon>
    </lineage>
</organism>